<sequence>MSSTPTAEELALQNTVSQSASAHPELYHTVSHASNNSYQLPQLSRSATSNFSTSARFAARYPTTAGESFQNLTPVNSNPSNQNSKTEPNPDDVEKCIQDPLLQVFPVVEEPERFVFSIDPKSPLIAVNWPFKRKLKTTCILAYVALCSSFASSVFAVPAEAITTVFHISLTVSLLTMTVFLLGYCSGPIIWAPLSELSGRKPPILIGMLGFGIFNISVAVGKDIQTIMMCRFFAGFFASAPLTVVAAALADMYSNKYRGTAITLFSAMVFDGPLVSPIVGGFLTKSYLGWRWTEYITSFMGFFALIIVYLFCDETYSKAIIQGKAKEYRAITGNYFVHAKSEEEVLTLSDIAKNYLLVPMKLLFTEPICFLITLYSSFVYAILYLLLEAYPIIFGEKRHFSMGVAELPYIGLLVGVFIGSGINIAFEPWYYRKCLAQGGKPDPEARLPPMMIGCFMFPAGIFWLSWSGHYSYVNWVVPALSGLATGCGILLIFLQCINYLIDAYLFRAASAIAANTIMRSAMAAGFPLFAVQMFHNMGVGWAGSLLGFIATALIPMPFVFFFFGRKIRRMSKMAVDF</sequence>
<feature type="chain" id="PRO_0000372792" description="Uncharacterized transporter C36.02c">
    <location>
        <begin position="1"/>
        <end position="577"/>
    </location>
</feature>
<feature type="transmembrane region" description="Helical" evidence="1">
    <location>
        <begin position="139"/>
        <end position="159"/>
    </location>
</feature>
<feature type="transmembrane region" description="Helical" evidence="1">
    <location>
        <begin position="174"/>
        <end position="194"/>
    </location>
</feature>
<feature type="transmembrane region" description="Helical" evidence="1">
    <location>
        <begin position="204"/>
        <end position="224"/>
    </location>
</feature>
<feature type="transmembrane region" description="Helical" evidence="1">
    <location>
        <begin position="232"/>
        <end position="252"/>
    </location>
</feature>
<feature type="transmembrane region" description="Helical" evidence="1">
    <location>
        <begin position="262"/>
        <end position="282"/>
    </location>
</feature>
<feature type="transmembrane region" description="Helical" evidence="1">
    <location>
        <begin position="292"/>
        <end position="312"/>
    </location>
</feature>
<feature type="transmembrane region" description="Helical" evidence="1">
    <location>
        <begin position="367"/>
        <end position="387"/>
    </location>
</feature>
<feature type="transmembrane region" description="Helical" evidence="1">
    <location>
        <begin position="402"/>
        <end position="422"/>
    </location>
</feature>
<feature type="transmembrane region" description="Helical" evidence="1">
    <location>
        <begin position="447"/>
        <end position="467"/>
    </location>
</feature>
<feature type="transmembrane region" description="Helical" evidence="1">
    <location>
        <begin position="473"/>
        <end position="493"/>
    </location>
</feature>
<feature type="transmembrane region" description="Helical" evidence="1">
    <location>
        <begin position="504"/>
        <end position="526"/>
    </location>
</feature>
<feature type="transmembrane region" description="Helical" evidence="1">
    <location>
        <begin position="543"/>
        <end position="563"/>
    </location>
</feature>
<feature type="region of interest" description="Disordered" evidence="2">
    <location>
        <begin position="1"/>
        <end position="24"/>
    </location>
</feature>
<feature type="region of interest" description="Disordered" evidence="2">
    <location>
        <begin position="68"/>
        <end position="93"/>
    </location>
</feature>
<feature type="compositionally biased region" description="Polar residues" evidence="2">
    <location>
        <begin position="1"/>
        <end position="21"/>
    </location>
</feature>
<feature type="compositionally biased region" description="Polar residues" evidence="2">
    <location>
        <begin position="68"/>
        <end position="87"/>
    </location>
</feature>
<protein>
    <recommendedName>
        <fullName>Uncharacterized transporter C36.02c</fullName>
    </recommendedName>
</protein>
<name>YN42_SCHPO</name>
<comment type="subcellular location">
    <subcellularLocation>
        <location evidence="3">Endoplasmic reticulum</location>
    </subcellularLocation>
    <subcellularLocation>
        <location evidence="1">Membrane</location>
        <topology evidence="1">Multi-pass membrane protein</topology>
    </subcellularLocation>
</comment>
<comment type="similarity">
    <text evidence="1">Belongs to the major facilitator superfamily. CAR1 family.</text>
</comment>
<evidence type="ECO:0000255" key="1"/>
<evidence type="ECO:0000256" key="2">
    <source>
        <dbReference type="SAM" id="MobiDB-lite"/>
    </source>
</evidence>
<evidence type="ECO:0000269" key="3">
    <source>
    </source>
</evidence>
<evidence type="ECO:0000305" key="4"/>
<evidence type="ECO:0000312" key="5">
    <source>
        <dbReference type="EMBL" id="CAA19050.1"/>
    </source>
</evidence>
<dbReference type="EMBL" id="CU329671">
    <property type="protein sequence ID" value="CAA19050.1"/>
    <property type="molecule type" value="Genomic_DNA"/>
</dbReference>
<dbReference type="PIR" id="T40297">
    <property type="entry name" value="T40297"/>
</dbReference>
<dbReference type="RefSeq" id="NP_595330.1">
    <property type="nucleotide sequence ID" value="NM_001021238.2"/>
</dbReference>
<dbReference type="SMR" id="O59699"/>
<dbReference type="BioGRID" id="276817">
    <property type="interactions" value="1"/>
</dbReference>
<dbReference type="FunCoup" id="O59699">
    <property type="interactions" value="131"/>
</dbReference>
<dbReference type="STRING" id="284812.O59699"/>
<dbReference type="iPTMnet" id="O59699"/>
<dbReference type="PaxDb" id="4896-SPBC36.02c.1"/>
<dbReference type="EnsemblFungi" id="SPBC36.02c.1">
    <property type="protein sequence ID" value="SPBC36.02c.1:pep"/>
    <property type="gene ID" value="SPBC36.02c"/>
</dbReference>
<dbReference type="KEGG" id="spo:2540286"/>
<dbReference type="PomBase" id="SPBC36.02c"/>
<dbReference type="VEuPathDB" id="FungiDB:SPBC36.02c"/>
<dbReference type="eggNOG" id="KOG0255">
    <property type="taxonomic scope" value="Eukaryota"/>
</dbReference>
<dbReference type="HOGENOM" id="CLU_008455_11_4_1"/>
<dbReference type="InParanoid" id="O59699"/>
<dbReference type="OMA" id="VFADMYS"/>
<dbReference type="PhylomeDB" id="O59699"/>
<dbReference type="PRO" id="PR:O59699"/>
<dbReference type="Proteomes" id="UP000002485">
    <property type="component" value="Chromosome II"/>
</dbReference>
<dbReference type="GO" id="GO:0005783">
    <property type="term" value="C:endoplasmic reticulum"/>
    <property type="evidence" value="ECO:0007005"/>
    <property type="project" value="PomBase"/>
</dbReference>
<dbReference type="GO" id="GO:0005886">
    <property type="term" value="C:plasma membrane"/>
    <property type="evidence" value="ECO:0000266"/>
    <property type="project" value="PomBase"/>
</dbReference>
<dbReference type="GO" id="GO:0015606">
    <property type="term" value="F:spermidine transmembrane transporter activity"/>
    <property type="evidence" value="ECO:0000266"/>
    <property type="project" value="PomBase"/>
</dbReference>
<dbReference type="GO" id="GO:0000297">
    <property type="term" value="F:spermine transmembrane transporter activity"/>
    <property type="evidence" value="ECO:0000266"/>
    <property type="project" value="PomBase"/>
</dbReference>
<dbReference type="GO" id="GO:0022857">
    <property type="term" value="F:transmembrane transporter activity"/>
    <property type="evidence" value="ECO:0000318"/>
    <property type="project" value="GO_Central"/>
</dbReference>
<dbReference type="GO" id="GO:1903711">
    <property type="term" value="P:spermidine transmembrane transport"/>
    <property type="evidence" value="ECO:0000305"/>
    <property type="project" value="PomBase"/>
</dbReference>
<dbReference type="GO" id="GO:1903710">
    <property type="term" value="P:spermine transmembrane transport"/>
    <property type="evidence" value="ECO:0000305"/>
    <property type="project" value="PomBase"/>
</dbReference>
<dbReference type="GO" id="GO:0055085">
    <property type="term" value="P:transmembrane transport"/>
    <property type="evidence" value="ECO:0000318"/>
    <property type="project" value="GO_Central"/>
</dbReference>
<dbReference type="CDD" id="cd17323">
    <property type="entry name" value="MFS_Tpo1_MDR_like"/>
    <property type="match status" value="1"/>
</dbReference>
<dbReference type="FunFam" id="1.20.1250.20:FF:000011">
    <property type="entry name" value="MFS multidrug transporter, putative"/>
    <property type="match status" value="1"/>
</dbReference>
<dbReference type="Gene3D" id="1.20.1250.20">
    <property type="entry name" value="MFS general substrate transporter like domains"/>
    <property type="match status" value="1"/>
</dbReference>
<dbReference type="InterPro" id="IPR011701">
    <property type="entry name" value="MFS"/>
</dbReference>
<dbReference type="InterPro" id="IPR020846">
    <property type="entry name" value="MFS_dom"/>
</dbReference>
<dbReference type="InterPro" id="IPR036259">
    <property type="entry name" value="MFS_trans_sf"/>
</dbReference>
<dbReference type="PANTHER" id="PTHR23502">
    <property type="entry name" value="MAJOR FACILITATOR SUPERFAMILY"/>
    <property type="match status" value="1"/>
</dbReference>
<dbReference type="PANTHER" id="PTHR23502:SF31">
    <property type="entry name" value="POLYAMINE TRANSPORTER 1"/>
    <property type="match status" value="1"/>
</dbReference>
<dbReference type="Pfam" id="PF07690">
    <property type="entry name" value="MFS_1"/>
    <property type="match status" value="1"/>
</dbReference>
<dbReference type="SUPFAM" id="SSF103473">
    <property type="entry name" value="MFS general substrate transporter"/>
    <property type="match status" value="1"/>
</dbReference>
<dbReference type="PROSITE" id="PS50850">
    <property type="entry name" value="MFS"/>
    <property type="match status" value="1"/>
</dbReference>
<accession>O59699</accession>
<reference evidence="5" key="1">
    <citation type="journal article" date="2002" name="Nature">
        <title>The genome sequence of Schizosaccharomyces pombe.</title>
        <authorList>
            <person name="Wood V."/>
            <person name="Gwilliam R."/>
            <person name="Rajandream M.A."/>
            <person name="Lyne M.H."/>
            <person name="Lyne R."/>
            <person name="Stewart A."/>
            <person name="Sgouros J.G."/>
            <person name="Peat N."/>
            <person name="Hayles J."/>
            <person name="Baker S.G."/>
            <person name="Basham D."/>
            <person name="Bowman S."/>
            <person name="Brooks K."/>
            <person name="Brown D."/>
            <person name="Brown S."/>
            <person name="Chillingworth T."/>
            <person name="Churcher C.M."/>
            <person name="Collins M."/>
            <person name="Connor R."/>
            <person name="Cronin A."/>
            <person name="Davis P."/>
            <person name="Feltwell T."/>
            <person name="Fraser A."/>
            <person name="Gentles S."/>
            <person name="Goble A."/>
            <person name="Hamlin N."/>
            <person name="Harris D.E."/>
            <person name="Hidalgo J."/>
            <person name="Hodgson G."/>
            <person name="Holroyd S."/>
            <person name="Hornsby T."/>
            <person name="Howarth S."/>
            <person name="Huckle E.J."/>
            <person name="Hunt S."/>
            <person name="Jagels K."/>
            <person name="James K.D."/>
            <person name="Jones L."/>
            <person name="Jones M."/>
            <person name="Leather S."/>
            <person name="McDonald S."/>
            <person name="McLean J."/>
            <person name="Mooney P."/>
            <person name="Moule S."/>
            <person name="Mungall K.L."/>
            <person name="Murphy L.D."/>
            <person name="Niblett D."/>
            <person name="Odell C."/>
            <person name="Oliver K."/>
            <person name="O'Neil S."/>
            <person name="Pearson D."/>
            <person name="Quail M.A."/>
            <person name="Rabbinowitsch E."/>
            <person name="Rutherford K.M."/>
            <person name="Rutter S."/>
            <person name="Saunders D."/>
            <person name="Seeger K."/>
            <person name="Sharp S."/>
            <person name="Skelton J."/>
            <person name="Simmonds M.N."/>
            <person name="Squares R."/>
            <person name="Squares S."/>
            <person name="Stevens K."/>
            <person name="Taylor K."/>
            <person name="Taylor R.G."/>
            <person name="Tivey A."/>
            <person name="Walsh S.V."/>
            <person name="Warren T."/>
            <person name="Whitehead S."/>
            <person name="Woodward J.R."/>
            <person name="Volckaert G."/>
            <person name="Aert R."/>
            <person name="Robben J."/>
            <person name="Grymonprez B."/>
            <person name="Weltjens I."/>
            <person name="Vanstreels E."/>
            <person name="Rieger M."/>
            <person name="Schaefer M."/>
            <person name="Mueller-Auer S."/>
            <person name="Gabel C."/>
            <person name="Fuchs M."/>
            <person name="Duesterhoeft A."/>
            <person name="Fritzc C."/>
            <person name="Holzer E."/>
            <person name="Moestl D."/>
            <person name="Hilbert H."/>
            <person name="Borzym K."/>
            <person name="Langer I."/>
            <person name="Beck A."/>
            <person name="Lehrach H."/>
            <person name="Reinhardt R."/>
            <person name="Pohl T.M."/>
            <person name="Eger P."/>
            <person name="Zimmermann W."/>
            <person name="Wedler H."/>
            <person name="Wambutt R."/>
            <person name="Purnelle B."/>
            <person name="Goffeau A."/>
            <person name="Cadieu E."/>
            <person name="Dreano S."/>
            <person name="Gloux S."/>
            <person name="Lelaure V."/>
            <person name="Mottier S."/>
            <person name="Galibert F."/>
            <person name="Aves S.J."/>
            <person name="Xiang Z."/>
            <person name="Hunt C."/>
            <person name="Moore K."/>
            <person name="Hurst S.M."/>
            <person name="Lucas M."/>
            <person name="Rochet M."/>
            <person name="Gaillardin C."/>
            <person name="Tallada V.A."/>
            <person name="Garzon A."/>
            <person name="Thode G."/>
            <person name="Daga R.R."/>
            <person name="Cruzado L."/>
            <person name="Jimenez J."/>
            <person name="Sanchez M."/>
            <person name="del Rey F."/>
            <person name="Benito J."/>
            <person name="Dominguez A."/>
            <person name="Revuelta J.L."/>
            <person name="Moreno S."/>
            <person name="Armstrong J."/>
            <person name="Forsburg S.L."/>
            <person name="Cerutti L."/>
            <person name="Lowe T."/>
            <person name="McCombie W.R."/>
            <person name="Paulsen I."/>
            <person name="Potashkin J."/>
            <person name="Shpakovski G.V."/>
            <person name="Ussery D."/>
            <person name="Barrell B.G."/>
            <person name="Nurse P."/>
        </authorList>
    </citation>
    <scope>NUCLEOTIDE SEQUENCE [LARGE SCALE GENOMIC DNA]</scope>
    <source>
        <strain>972 / ATCC 24843</strain>
    </source>
</reference>
<reference evidence="4" key="2">
    <citation type="journal article" date="2006" name="Nat. Biotechnol.">
        <title>ORFeome cloning and global analysis of protein localization in the fission yeast Schizosaccharomyces pombe.</title>
        <authorList>
            <person name="Matsuyama A."/>
            <person name="Arai R."/>
            <person name="Yashiroda Y."/>
            <person name="Shirai A."/>
            <person name="Kamata A."/>
            <person name="Sekido S."/>
            <person name="Kobayashi Y."/>
            <person name="Hashimoto A."/>
            <person name="Hamamoto M."/>
            <person name="Hiraoka Y."/>
            <person name="Horinouchi S."/>
            <person name="Yoshida M."/>
        </authorList>
    </citation>
    <scope>SUBCELLULAR LOCATION [LARGE SCALE ANALYSIS]</scope>
</reference>
<organism>
    <name type="scientific">Schizosaccharomyces pombe (strain 972 / ATCC 24843)</name>
    <name type="common">Fission yeast</name>
    <dbReference type="NCBI Taxonomy" id="284812"/>
    <lineage>
        <taxon>Eukaryota</taxon>
        <taxon>Fungi</taxon>
        <taxon>Dikarya</taxon>
        <taxon>Ascomycota</taxon>
        <taxon>Taphrinomycotina</taxon>
        <taxon>Schizosaccharomycetes</taxon>
        <taxon>Schizosaccharomycetales</taxon>
        <taxon>Schizosaccharomycetaceae</taxon>
        <taxon>Schizosaccharomyces</taxon>
    </lineage>
</organism>
<proteinExistence type="inferred from homology"/>
<keyword id="KW-0256">Endoplasmic reticulum</keyword>
<keyword id="KW-0472">Membrane</keyword>
<keyword id="KW-1185">Reference proteome</keyword>
<keyword id="KW-0812">Transmembrane</keyword>
<keyword id="KW-1133">Transmembrane helix</keyword>
<keyword id="KW-0813">Transport</keyword>
<gene>
    <name type="ORF">SPBC36.02c</name>
</gene>